<keyword id="KW-1015">Disulfide bond</keyword>
<keyword id="KW-0964">Secreted</keyword>
<keyword id="KW-0732">Signal</keyword>
<keyword id="KW-0800">Toxin</keyword>
<name>CT03_CONTS</name>
<organism>
    <name type="scientific">Conus tessulatus</name>
    <name type="common">Tessellate cone</name>
    <dbReference type="NCBI Taxonomy" id="101317"/>
    <lineage>
        <taxon>Eukaryota</taxon>
        <taxon>Metazoa</taxon>
        <taxon>Spiralia</taxon>
        <taxon>Lophotrochozoa</taxon>
        <taxon>Mollusca</taxon>
        <taxon>Gastropoda</taxon>
        <taxon>Caenogastropoda</taxon>
        <taxon>Neogastropoda</taxon>
        <taxon>Conoidea</taxon>
        <taxon>Conidae</taxon>
        <taxon>Conus</taxon>
        <taxon>Tesselliconus</taxon>
    </lineage>
</organism>
<comment type="subcellular location">
    <subcellularLocation>
        <location evidence="4">Secreted</location>
    </subcellularLocation>
</comment>
<comment type="tissue specificity">
    <text evidence="4">Expressed by the venom duct.</text>
</comment>
<comment type="domain">
    <text evidence="3">The cysteine framework is V (CC-CC).</text>
</comment>
<comment type="PTM">
    <text evidence="3">Contains 2 disulfide bonds that can be either 'C1-C3, C2-C4' or 'C1-C4, C2-C3', since these disulfide connectivities have been observed for conotoxins with cysteine framework V (for examples, see AC P0DQQ7 and AC P81755).</text>
</comment>
<comment type="similarity">
    <text evidence="3">Belongs to the conotoxin T superfamily.</text>
</comment>
<feature type="signal peptide" evidence="2">
    <location>
        <begin position="1"/>
        <end position="19"/>
    </location>
</feature>
<feature type="propeptide" id="PRO_0000274100" evidence="1">
    <location>
        <begin position="20"/>
        <end position="47"/>
    </location>
</feature>
<feature type="peptide" id="PRO_0000274101" description="Conotoxin Ts-03">
    <location>
        <begin position="49"/>
        <end position="59"/>
    </location>
</feature>
<sequence length="59" mass="6623">MRCLPVFIILLLLIPSAASVAQPKTKDDVALASFYDNAKRTLQRHWAKSLCCPEDAWCC</sequence>
<proteinExistence type="inferred from homology"/>
<reference key="1">
    <citation type="journal article" date="2001" name="Mol. Biol. Evol.">
        <title>Mechanisms for evolving hypervariability: the case of conopeptides.</title>
        <authorList>
            <person name="Conticello S.G."/>
            <person name="Gilad Y."/>
            <person name="Avidan N."/>
            <person name="Ben-Asher E."/>
            <person name="Levy Z."/>
            <person name="Fainzilber M."/>
        </authorList>
    </citation>
    <scope>NUCLEOTIDE SEQUENCE [MRNA]</scope>
    <source>
        <tissue>Venom duct</tissue>
    </source>
</reference>
<accession>Q9BPF6</accession>
<protein>
    <recommendedName>
        <fullName evidence="5">Conotoxin Ts-03</fullName>
    </recommendedName>
</protein>
<evidence type="ECO:0000250" key="1"/>
<evidence type="ECO:0000255" key="2"/>
<evidence type="ECO:0000305" key="3"/>
<evidence type="ECO:0000305" key="4">
    <source>
    </source>
</evidence>
<evidence type="ECO:0000312" key="5">
    <source>
        <dbReference type="EMBL" id="AAG60401.1"/>
    </source>
</evidence>
<dbReference type="EMBL" id="AF214973">
    <property type="protein sequence ID" value="AAG60401.1"/>
    <property type="molecule type" value="mRNA"/>
</dbReference>
<dbReference type="ConoServer" id="660">
    <property type="toxin name" value="Ts-03 precursor"/>
</dbReference>
<dbReference type="GO" id="GO:0005576">
    <property type="term" value="C:extracellular region"/>
    <property type="evidence" value="ECO:0007669"/>
    <property type="project" value="UniProtKB-SubCell"/>
</dbReference>
<dbReference type="GO" id="GO:0090729">
    <property type="term" value="F:toxin activity"/>
    <property type="evidence" value="ECO:0007669"/>
    <property type="project" value="UniProtKB-KW"/>
</dbReference>
<dbReference type="InterPro" id="IPR031565">
    <property type="entry name" value="T-conotoxin"/>
</dbReference>
<dbReference type="Pfam" id="PF16981">
    <property type="entry name" value="Chi-conotoxin"/>
    <property type="match status" value="1"/>
</dbReference>